<proteinExistence type="inferred from homology"/>
<accession>Q8UFL9</accession>
<evidence type="ECO:0000255" key="1">
    <source>
        <dbReference type="HAMAP-Rule" id="MF_01139"/>
    </source>
</evidence>
<protein>
    <recommendedName>
        <fullName evidence="1">Isoprenyl transferase</fullName>
        <ecNumber evidence="1">2.5.1.-</ecNumber>
    </recommendedName>
</protein>
<comment type="function">
    <text evidence="1">Catalyzes the condensation of isopentenyl diphosphate (IPP) with allylic pyrophosphates generating different type of terpenoids.</text>
</comment>
<comment type="cofactor">
    <cofactor evidence="1">
        <name>Mg(2+)</name>
        <dbReference type="ChEBI" id="CHEBI:18420"/>
    </cofactor>
    <text evidence="1">Binds 2 magnesium ions per subunit.</text>
</comment>
<comment type="subunit">
    <text evidence="1">Homodimer.</text>
</comment>
<comment type="similarity">
    <text evidence="1">Belongs to the UPP synthase family.</text>
</comment>
<reference key="1">
    <citation type="journal article" date="2001" name="Science">
        <title>The genome of the natural genetic engineer Agrobacterium tumefaciens C58.</title>
        <authorList>
            <person name="Wood D.W."/>
            <person name="Setubal J.C."/>
            <person name="Kaul R."/>
            <person name="Monks D.E."/>
            <person name="Kitajima J.P."/>
            <person name="Okura V.K."/>
            <person name="Zhou Y."/>
            <person name="Chen L."/>
            <person name="Wood G.E."/>
            <person name="Almeida N.F. Jr."/>
            <person name="Woo L."/>
            <person name="Chen Y."/>
            <person name="Paulsen I.T."/>
            <person name="Eisen J.A."/>
            <person name="Karp P.D."/>
            <person name="Bovee D. Sr."/>
            <person name="Chapman P."/>
            <person name="Clendenning J."/>
            <person name="Deatherage G."/>
            <person name="Gillet W."/>
            <person name="Grant C."/>
            <person name="Kutyavin T."/>
            <person name="Levy R."/>
            <person name="Li M.-J."/>
            <person name="McClelland E."/>
            <person name="Palmieri A."/>
            <person name="Raymond C."/>
            <person name="Rouse G."/>
            <person name="Saenphimmachak C."/>
            <person name="Wu Z."/>
            <person name="Romero P."/>
            <person name="Gordon D."/>
            <person name="Zhang S."/>
            <person name="Yoo H."/>
            <person name="Tao Y."/>
            <person name="Biddle P."/>
            <person name="Jung M."/>
            <person name="Krespan W."/>
            <person name="Perry M."/>
            <person name="Gordon-Kamm B."/>
            <person name="Liao L."/>
            <person name="Kim S."/>
            <person name="Hendrick C."/>
            <person name="Zhao Z.-Y."/>
            <person name="Dolan M."/>
            <person name="Chumley F."/>
            <person name="Tingey S.V."/>
            <person name="Tomb J.-F."/>
            <person name="Gordon M.P."/>
            <person name="Olson M.V."/>
            <person name="Nester E.W."/>
        </authorList>
    </citation>
    <scope>NUCLEOTIDE SEQUENCE [LARGE SCALE GENOMIC DNA]</scope>
    <source>
        <strain>C58 / ATCC 33970</strain>
    </source>
</reference>
<reference key="2">
    <citation type="journal article" date="2001" name="Science">
        <title>Genome sequence of the plant pathogen and biotechnology agent Agrobacterium tumefaciens C58.</title>
        <authorList>
            <person name="Goodner B."/>
            <person name="Hinkle G."/>
            <person name="Gattung S."/>
            <person name="Miller N."/>
            <person name="Blanchard M."/>
            <person name="Qurollo B."/>
            <person name="Goldman B.S."/>
            <person name="Cao Y."/>
            <person name="Askenazi M."/>
            <person name="Halling C."/>
            <person name="Mullin L."/>
            <person name="Houmiel K."/>
            <person name="Gordon J."/>
            <person name="Vaudin M."/>
            <person name="Iartchouk O."/>
            <person name="Epp A."/>
            <person name="Liu F."/>
            <person name="Wollam C."/>
            <person name="Allinger M."/>
            <person name="Doughty D."/>
            <person name="Scott C."/>
            <person name="Lappas C."/>
            <person name="Markelz B."/>
            <person name="Flanagan C."/>
            <person name="Crowell C."/>
            <person name="Gurson J."/>
            <person name="Lomo C."/>
            <person name="Sear C."/>
            <person name="Strub G."/>
            <person name="Cielo C."/>
            <person name="Slater S."/>
        </authorList>
    </citation>
    <scope>NUCLEOTIDE SEQUENCE [LARGE SCALE GENOMIC DNA]</scope>
    <source>
        <strain>C58 / ATCC 33970</strain>
    </source>
</reference>
<sequence length="247" mass="27814">MPTTTRSSIPEHVAIIMDGNGRWAKQRGLPRVMGHRRGVEAVRETVRAAGDCGISYLTLFAFSSENWRRPESEVSDLMGLLKAFIRRDLAELHRENVRVRIIGDRQGLKTDIRSLLEEAEQMTAGNTKLTLVIAFNYGSRDEITRATASIARDVAEGRLSADAITPEMISSRLDTSGMPDPDLIIRTSGEERLSNFLLWQAAYSEFLFVPEYWPDFDRQRFFSAIEQYATRDRRFGALAEQVAVAGA</sequence>
<organism>
    <name type="scientific">Agrobacterium fabrum (strain C58 / ATCC 33970)</name>
    <name type="common">Agrobacterium tumefaciens (strain C58)</name>
    <dbReference type="NCBI Taxonomy" id="176299"/>
    <lineage>
        <taxon>Bacteria</taxon>
        <taxon>Pseudomonadati</taxon>
        <taxon>Pseudomonadota</taxon>
        <taxon>Alphaproteobacteria</taxon>
        <taxon>Hyphomicrobiales</taxon>
        <taxon>Rhizobiaceae</taxon>
        <taxon>Rhizobium/Agrobacterium group</taxon>
        <taxon>Agrobacterium</taxon>
        <taxon>Agrobacterium tumefaciens complex</taxon>
    </lineage>
</organism>
<keyword id="KW-0460">Magnesium</keyword>
<keyword id="KW-0479">Metal-binding</keyword>
<keyword id="KW-1185">Reference proteome</keyword>
<keyword id="KW-0808">Transferase</keyword>
<dbReference type="EC" id="2.5.1.-" evidence="1"/>
<dbReference type="EMBL" id="AE007869">
    <property type="protein sequence ID" value="AAK87170.1"/>
    <property type="molecule type" value="Genomic_DNA"/>
</dbReference>
<dbReference type="PIR" id="A97527">
    <property type="entry name" value="A97527"/>
</dbReference>
<dbReference type="PIR" id="AB2746">
    <property type="entry name" value="AB2746"/>
</dbReference>
<dbReference type="RefSeq" id="NP_354385.1">
    <property type="nucleotide sequence ID" value="NC_003062.2"/>
</dbReference>
<dbReference type="RefSeq" id="WP_010971573.1">
    <property type="nucleotide sequence ID" value="NC_003062.2"/>
</dbReference>
<dbReference type="SMR" id="Q8UFL9"/>
<dbReference type="STRING" id="176299.Atu1378"/>
<dbReference type="EnsemblBacteria" id="AAK87170">
    <property type="protein sequence ID" value="AAK87170"/>
    <property type="gene ID" value="Atu1378"/>
</dbReference>
<dbReference type="GeneID" id="1133416"/>
<dbReference type="KEGG" id="atu:Atu1378"/>
<dbReference type="PATRIC" id="fig|176299.10.peg.1401"/>
<dbReference type="eggNOG" id="COG0020">
    <property type="taxonomic scope" value="Bacteria"/>
</dbReference>
<dbReference type="HOGENOM" id="CLU_038505_1_1_5"/>
<dbReference type="OrthoDB" id="4191603at2"/>
<dbReference type="PhylomeDB" id="Q8UFL9"/>
<dbReference type="BioCyc" id="AGRO:ATU1378-MONOMER"/>
<dbReference type="Proteomes" id="UP000000813">
    <property type="component" value="Chromosome circular"/>
</dbReference>
<dbReference type="GO" id="GO:0005829">
    <property type="term" value="C:cytosol"/>
    <property type="evidence" value="ECO:0007669"/>
    <property type="project" value="TreeGrafter"/>
</dbReference>
<dbReference type="GO" id="GO:0008834">
    <property type="term" value="F:ditrans,polycis-undecaprenyl-diphosphate synthase [(2E,6E)-farnesyl-diphosphate specific] activity"/>
    <property type="evidence" value="ECO:0007669"/>
    <property type="project" value="TreeGrafter"/>
</dbReference>
<dbReference type="GO" id="GO:0000287">
    <property type="term" value="F:magnesium ion binding"/>
    <property type="evidence" value="ECO:0007669"/>
    <property type="project" value="UniProtKB-UniRule"/>
</dbReference>
<dbReference type="GO" id="GO:0016094">
    <property type="term" value="P:polyprenol biosynthetic process"/>
    <property type="evidence" value="ECO:0007669"/>
    <property type="project" value="TreeGrafter"/>
</dbReference>
<dbReference type="CDD" id="cd00475">
    <property type="entry name" value="Cis_IPPS"/>
    <property type="match status" value="1"/>
</dbReference>
<dbReference type="FunFam" id="3.40.1180.10:FF:000001">
    <property type="entry name" value="(2E,6E)-farnesyl-diphosphate-specific ditrans,polycis-undecaprenyl-diphosphate synthase"/>
    <property type="match status" value="1"/>
</dbReference>
<dbReference type="Gene3D" id="3.40.1180.10">
    <property type="entry name" value="Decaprenyl diphosphate synthase-like"/>
    <property type="match status" value="1"/>
</dbReference>
<dbReference type="HAMAP" id="MF_01139">
    <property type="entry name" value="ISPT"/>
    <property type="match status" value="1"/>
</dbReference>
<dbReference type="InterPro" id="IPR001441">
    <property type="entry name" value="UPP_synth-like"/>
</dbReference>
<dbReference type="InterPro" id="IPR018520">
    <property type="entry name" value="UPP_synth-like_CS"/>
</dbReference>
<dbReference type="InterPro" id="IPR036424">
    <property type="entry name" value="UPP_synth-like_sf"/>
</dbReference>
<dbReference type="NCBIfam" id="NF011405">
    <property type="entry name" value="PRK14830.1"/>
    <property type="match status" value="1"/>
</dbReference>
<dbReference type="NCBIfam" id="NF011408">
    <property type="entry name" value="PRK14834.1"/>
    <property type="match status" value="1"/>
</dbReference>
<dbReference type="NCBIfam" id="TIGR00055">
    <property type="entry name" value="uppS"/>
    <property type="match status" value="1"/>
</dbReference>
<dbReference type="PANTHER" id="PTHR10291:SF0">
    <property type="entry name" value="DEHYDRODOLICHYL DIPHOSPHATE SYNTHASE 2"/>
    <property type="match status" value="1"/>
</dbReference>
<dbReference type="PANTHER" id="PTHR10291">
    <property type="entry name" value="DEHYDRODOLICHYL DIPHOSPHATE SYNTHASE FAMILY MEMBER"/>
    <property type="match status" value="1"/>
</dbReference>
<dbReference type="Pfam" id="PF01255">
    <property type="entry name" value="Prenyltransf"/>
    <property type="match status" value="1"/>
</dbReference>
<dbReference type="SUPFAM" id="SSF64005">
    <property type="entry name" value="Undecaprenyl diphosphate synthase"/>
    <property type="match status" value="1"/>
</dbReference>
<dbReference type="PROSITE" id="PS01066">
    <property type="entry name" value="UPP_SYNTHASE"/>
    <property type="match status" value="1"/>
</dbReference>
<gene>
    <name evidence="1" type="primary">uppS</name>
    <name type="ordered locus">Atu1378</name>
    <name type="ORF">AGR_C_2550</name>
</gene>
<name>ISPT_AGRFC</name>
<feature type="chain" id="PRO_0000123560" description="Isoprenyl transferase">
    <location>
        <begin position="1"/>
        <end position="247"/>
    </location>
</feature>
<feature type="active site" evidence="1">
    <location>
        <position position="18"/>
    </location>
</feature>
<feature type="active site" description="Proton acceptor" evidence="1">
    <location>
        <position position="66"/>
    </location>
</feature>
<feature type="binding site" evidence="1">
    <location>
        <position position="18"/>
    </location>
    <ligand>
        <name>Mg(2+)</name>
        <dbReference type="ChEBI" id="CHEBI:18420"/>
    </ligand>
</feature>
<feature type="binding site" evidence="1">
    <location>
        <begin position="19"/>
        <end position="22"/>
    </location>
    <ligand>
        <name>substrate</name>
    </ligand>
</feature>
<feature type="binding site" evidence="1">
    <location>
        <position position="23"/>
    </location>
    <ligand>
        <name>substrate</name>
    </ligand>
</feature>
<feature type="binding site" evidence="1">
    <location>
        <position position="31"/>
    </location>
    <ligand>
        <name>substrate</name>
    </ligand>
</feature>
<feature type="binding site" evidence="1">
    <location>
        <position position="35"/>
    </location>
    <ligand>
        <name>substrate</name>
    </ligand>
</feature>
<feature type="binding site" evidence="1">
    <location>
        <begin position="63"/>
        <end position="65"/>
    </location>
    <ligand>
        <name>substrate</name>
    </ligand>
</feature>
<feature type="binding site" evidence="1">
    <location>
        <position position="67"/>
    </location>
    <ligand>
        <name>substrate</name>
    </ligand>
</feature>
<feature type="binding site" evidence="1">
    <location>
        <position position="69"/>
    </location>
    <ligand>
        <name>substrate</name>
    </ligand>
</feature>
<feature type="binding site" evidence="1">
    <location>
        <position position="186"/>
    </location>
    <ligand>
        <name>substrate</name>
    </ligand>
</feature>
<feature type="binding site" evidence="1">
    <location>
        <begin position="192"/>
        <end position="194"/>
    </location>
    <ligand>
        <name>substrate</name>
    </ligand>
</feature>
<feature type="binding site" evidence="1">
    <location>
        <position position="205"/>
    </location>
    <ligand>
        <name>Mg(2+)</name>
        <dbReference type="ChEBI" id="CHEBI:18420"/>
    </ligand>
</feature>